<protein>
    <recommendedName>
        <fullName evidence="1">Bifunctional protein PyrR</fullName>
    </recommendedName>
    <domain>
        <recommendedName>
            <fullName evidence="1">Pyrimidine operon regulatory protein</fullName>
        </recommendedName>
    </domain>
    <domain>
        <recommendedName>
            <fullName evidence="1">Uracil phosphoribosyltransferase</fullName>
            <shortName evidence="1">UPRTase</shortName>
            <ecNumber evidence="1">2.4.2.9</ecNumber>
        </recommendedName>
    </domain>
</protein>
<gene>
    <name evidence="1" type="primary">pyrR</name>
    <name type="ordered locus">LCA_0950</name>
</gene>
<reference key="1">
    <citation type="journal article" date="2005" name="Nat. Biotechnol.">
        <title>The complete genome sequence of the meat-borne lactic acid bacterium Lactobacillus sakei 23K.</title>
        <authorList>
            <person name="Chaillou S."/>
            <person name="Champomier-Verges M.-C."/>
            <person name="Cornet M."/>
            <person name="Crutz-Le Coq A.-M."/>
            <person name="Dudez A.-M."/>
            <person name="Martin V."/>
            <person name="Beaufils S."/>
            <person name="Darbon-Rongere E."/>
            <person name="Bossy R."/>
            <person name="Loux V."/>
            <person name="Zagorec M."/>
        </authorList>
    </citation>
    <scope>NUCLEOTIDE SEQUENCE [LARGE SCALE GENOMIC DNA]</scope>
    <source>
        <strain>23K</strain>
    </source>
</reference>
<feature type="chain" id="PRO_1000053843" description="Bifunctional protein PyrR">
    <location>
        <begin position="1"/>
        <end position="179"/>
    </location>
</feature>
<feature type="short sequence motif" description="PRPP-binding" evidence="1">
    <location>
        <begin position="99"/>
        <end position="111"/>
    </location>
</feature>
<organism>
    <name type="scientific">Latilactobacillus sakei subsp. sakei (strain 23K)</name>
    <name type="common">Lactobacillus sakei subsp. sakei</name>
    <dbReference type="NCBI Taxonomy" id="314315"/>
    <lineage>
        <taxon>Bacteria</taxon>
        <taxon>Bacillati</taxon>
        <taxon>Bacillota</taxon>
        <taxon>Bacilli</taxon>
        <taxon>Lactobacillales</taxon>
        <taxon>Lactobacillaceae</taxon>
        <taxon>Latilactobacillus</taxon>
    </lineage>
</organism>
<dbReference type="EC" id="2.4.2.9" evidence="1"/>
<dbReference type="EMBL" id="CR936503">
    <property type="protein sequence ID" value="CAI55252.1"/>
    <property type="molecule type" value="Genomic_DNA"/>
</dbReference>
<dbReference type="RefSeq" id="WP_011374652.1">
    <property type="nucleotide sequence ID" value="NC_007576.1"/>
</dbReference>
<dbReference type="SMR" id="Q38X29"/>
<dbReference type="STRING" id="314315.LCA_0950"/>
<dbReference type="GeneID" id="57133811"/>
<dbReference type="KEGG" id="lsa:LCA_0950"/>
<dbReference type="eggNOG" id="COG2065">
    <property type="taxonomic scope" value="Bacteria"/>
</dbReference>
<dbReference type="HOGENOM" id="CLU_094234_2_1_9"/>
<dbReference type="OrthoDB" id="9802227at2"/>
<dbReference type="Proteomes" id="UP000002707">
    <property type="component" value="Chromosome"/>
</dbReference>
<dbReference type="GO" id="GO:0003723">
    <property type="term" value="F:RNA binding"/>
    <property type="evidence" value="ECO:0007669"/>
    <property type="project" value="UniProtKB-UniRule"/>
</dbReference>
<dbReference type="GO" id="GO:0004845">
    <property type="term" value="F:uracil phosphoribosyltransferase activity"/>
    <property type="evidence" value="ECO:0007669"/>
    <property type="project" value="UniProtKB-UniRule"/>
</dbReference>
<dbReference type="GO" id="GO:0006353">
    <property type="term" value="P:DNA-templated transcription termination"/>
    <property type="evidence" value="ECO:0007669"/>
    <property type="project" value="UniProtKB-UniRule"/>
</dbReference>
<dbReference type="CDD" id="cd06223">
    <property type="entry name" value="PRTases_typeI"/>
    <property type="match status" value="1"/>
</dbReference>
<dbReference type="FunFam" id="3.40.50.2020:FF:000020">
    <property type="entry name" value="Bifunctional protein PyrR"/>
    <property type="match status" value="1"/>
</dbReference>
<dbReference type="Gene3D" id="3.40.50.2020">
    <property type="match status" value="1"/>
</dbReference>
<dbReference type="HAMAP" id="MF_01219">
    <property type="entry name" value="PyrR"/>
    <property type="match status" value="1"/>
</dbReference>
<dbReference type="InterPro" id="IPR000836">
    <property type="entry name" value="PRibTrfase_dom"/>
</dbReference>
<dbReference type="InterPro" id="IPR029057">
    <property type="entry name" value="PRTase-like"/>
</dbReference>
<dbReference type="InterPro" id="IPR023050">
    <property type="entry name" value="PyrR"/>
</dbReference>
<dbReference type="InterPro" id="IPR050137">
    <property type="entry name" value="PyrR_bifunctional"/>
</dbReference>
<dbReference type="NCBIfam" id="NF003545">
    <property type="entry name" value="PRK05205.1-1"/>
    <property type="match status" value="1"/>
</dbReference>
<dbReference type="NCBIfam" id="NF003548">
    <property type="entry name" value="PRK05205.1-4"/>
    <property type="match status" value="1"/>
</dbReference>
<dbReference type="NCBIfam" id="NF003549">
    <property type="entry name" value="PRK05205.1-5"/>
    <property type="match status" value="1"/>
</dbReference>
<dbReference type="PANTHER" id="PTHR11608">
    <property type="entry name" value="BIFUNCTIONAL PROTEIN PYRR"/>
    <property type="match status" value="1"/>
</dbReference>
<dbReference type="PANTHER" id="PTHR11608:SF0">
    <property type="entry name" value="BIFUNCTIONAL PROTEIN PYRR"/>
    <property type="match status" value="1"/>
</dbReference>
<dbReference type="Pfam" id="PF00156">
    <property type="entry name" value="Pribosyltran"/>
    <property type="match status" value="1"/>
</dbReference>
<dbReference type="SUPFAM" id="SSF53271">
    <property type="entry name" value="PRTase-like"/>
    <property type="match status" value="1"/>
</dbReference>
<sequence length="179" mass="20189">MVKEVVDSTTMKRVFTRITYEIIEQNKGISDLVFVGIKTRGVFIAERIAKRLEQLEGVTVPVGTLDITLYRDDQHDLNSHNEPQLNGNDIPVDITDKHVILIDDVLYTGRTIRAALDALMDLGRPKKISLAVLVDRGHRELPIRPDFVGKNIPTALNEQIKVAMQEIDEHDGITIEKLN</sequence>
<evidence type="ECO:0000255" key="1">
    <source>
        <dbReference type="HAMAP-Rule" id="MF_01219"/>
    </source>
</evidence>
<comment type="function">
    <text evidence="1">Regulates transcriptional attenuation of the pyrimidine nucleotide (pyr) operon by binding in a uridine-dependent manner to specific sites on pyr mRNA. This disrupts an antiterminator hairpin in the RNA and favors formation of a downstream transcription terminator, leading to a reduced expression of downstream genes.</text>
</comment>
<comment type="function">
    <text evidence="1">Also displays a weak uracil phosphoribosyltransferase activity which is not physiologically significant.</text>
</comment>
<comment type="catalytic activity">
    <reaction evidence="1">
        <text>UMP + diphosphate = 5-phospho-alpha-D-ribose 1-diphosphate + uracil</text>
        <dbReference type="Rhea" id="RHEA:13017"/>
        <dbReference type="ChEBI" id="CHEBI:17568"/>
        <dbReference type="ChEBI" id="CHEBI:33019"/>
        <dbReference type="ChEBI" id="CHEBI:57865"/>
        <dbReference type="ChEBI" id="CHEBI:58017"/>
        <dbReference type="EC" id="2.4.2.9"/>
    </reaction>
</comment>
<comment type="subunit">
    <text evidence="1">Homodimer and homohexamer; in equilibrium.</text>
</comment>
<comment type="similarity">
    <text evidence="1">Belongs to the purine/pyrimidine phosphoribosyltransferase family. PyrR subfamily.</text>
</comment>
<accession>Q38X29</accession>
<name>PYRR_LATSS</name>
<keyword id="KW-0328">Glycosyltransferase</keyword>
<keyword id="KW-1185">Reference proteome</keyword>
<keyword id="KW-0694">RNA-binding</keyword>
<keyword id="KW-0804">Transcription</keyword>
<keyword id="KW-0805">Transcription regulation</keyword>
<keyword id="KW-0806">Transcription termination</keyword>
<keyword id="KW-0808">Transferase</keyword>
<proteinExistence type="inferred from homology"/>